<name>UGPA_CRIGR</name>
<dbReference type="EC" id="2.7.7.9" evidence="2"/>
<dbReference type="EMBL" id="AF004368">
    <property type="protein sequence ID" value="AAC53343.1"/>
    <property type="molecule type" value="mRNA"/>
</dbReference>
<dbReference type="RefSeq" id="NP_001233687.1">
    <property type="nucleotide sequence ID" value="NM_001246758.1"/>
</dbReference>
<dbReference type="SMR" id="O35156"/>
<dbReference type="PaxDb" id="10029-NP_001233687.1"/>
<dbReference type="Ensembl" id="ENSCGRT00001015358.1">
    <property type="protein sequence ID" value="ENSCGRP00001011129.1"/>
    <property type="gene ID" value="ENSCGRG00001012845.1"/>
</dbReference>
<dbReference type="GeneID" id="100689325"/>
<dbReference type="KEGG" id="cge:100689325"/>
<dbReference type="CTD" id="7360"/>
<dbReference type="eggNOG" id="KOG2638">
    <property type="taxonomic scope" value="Eukaryota"/>
</dbReference>
<dbReference type="GeneTree" id="ENSGT00940000153464"/>
<dbReference type="OMA" id="KEYCFLS"/>
<dbReference type="OrthoDB" id="932129at2759"/>
<dbReference type="UniPathway" id="UPA00164"/>
<dbReference type="Proteomes" id="UP000694386">
    <property type="component" value="Unplaced"/>
</dbReference>
<dbReference type="Proteomes" id="UP001108280">
    <property type="component" value="Chromosome 1"/>
</dbReference>
<dbReference type="GO" id="GO:0005737">
    <property type="term" value="C:cytoplasm"/>
    <property type="evidence" value="ECO:0007669"/>
    <property type="project" value="UniProtKB-SubCell"/>
</dbReference>
<dbReference type="GO" id="GO:0042802">
    <property type="term" value="F:identical protein binding"/>
    <property type="evidence" value="ECO:0007669"/>
    <property type="project" value="Ensembl"/>
</dbReference>
<dbReference type="GO" id="GO:0046872">
    <property type="term" value="F:metal ion binding"/>
    <property type="evidence" value="ECO:0007669"/>
    <property type="project" value="UniProtKB-KW"/>
</dbReference>
<dbReference type="GO" id="GO:0003983">
    <property type="term" value="F:UTP:glucose-1-phosphate uridylyltransferase activity"/>
    <property type="evidence" value="ECO:0007669"/>
    <property type="project" value="UniProtKB-EC"/>
</dbReference>
<dbReference type="GO" id="GO:0007420">
    <property type="term" value="P:brain development"/>
    <property type="evidence" value="ECO:0007669"/>
    <property type="project" value="Ensembl"/>
</dbReference>
<dbReference type="GO" id="GO:0005978">
    <property type="term" value="P:glycogen biosynthetic process"/>
    <property type="evidence" value="ECO:0007669"/>
    <property type="project" value="UniProtKB-UniPathway"/>
</dbReference>
<dbReference type="GO" id="GO:0006011">
    <property type="term" value="P:UDP-alpha-D-glucose metabolic process"/>
    <property type="evidence" value="ECO:0007669"/>
    <property type="project" value="Ensembl"/>
</dbReference>
<dbReference type="GO" id="GO:0006065">
    <property type="term" value="P:UDP-glucuronate biosynthetic process"/>
    <property type="evidence" value="ECO:0007669"/>
    <property type="project" value="Ensembl"/>
</dbReference>
<dbReference type="CDD" id="cd00897">
    <property type="entry name" value="UGPase_euk"/>
    <property type="match status" value="1"/>
</dbReference>
<dbReference type="FunFam" id="2.160.10.10:FF:000001">
    <property type="entry name" value="UTP--glucose-1-phosphate uridylyltransferase"/>
    <property type="match status" value="1"/>
</dbReference>
<dbReference type="FunFam" id="3.90.550.10:FF:000002">
    <property type="entry name" value="UTP--glucose-1-phosphate uridylyltransferase"/>
    <property type="match status" value="1"/>
</dbReference>
<dbReference type="Gene3D" id="2.160.10.10">
    <property type="entry name" value="Hexapeptide repeat proteins"/>
    <property type="match status" value="1"/>
</dbReference>
<dbReference type="Gene3D" id="3.90.550.10">
    <property type="entry name" value="Spore Coat Polysaccharide Biosynthesis Protein SpsA, Chain A"/>
    <property type="match status" value="1"/>
</dbReference>
<dbReference type="InterPro" id="IPR029044">
    <property type="entry name" value="Nucleotide-diphossugar_trans"/>
</dbReference>
<dbReference type="InterPro" id="IPR002618">
    <property type="entry name" value="UDPGP_fam"/>
</dbReference>
<dbReference type="InterPro" id="IPR016267">
    <property type="entry name" value="UDPGP_trans"/>
</dbReference>
<dbReference type="PANTHER" id="PTHR43511">
    <property type="match status" value="1"/>
</dbReference>
<dbReference type="Pfam" id="PF01704">
    <property type="entry name" value="UDPGP"/>
    <property type="match status" value="1"/>
</dbReference>
<dbReference type="PIRSF" id="PIRSF000806">
    <property type="entry name" value="UDPGP"/>
    <property type="match status" value="1"/>
</dbReference>
<dbReference type="SUPFAM" id="SSF53448">
    <property type="entry name" value="Nucleotide-diphospho-sugar transferases"/>
    <property type="match status" value="1"/>
</dbReference>
<keyword id="KW-0007">Acetylation</keyword>
<keyword id="KW-0963">Cytoplasm</keyword>
<keyword id="KW-0460">Magnesium</keyword>
<keyword id="KW-0479">Metal-binding</keyword>
<keyword id="KW-0548">Nucleotidyltransferase</keyword>
<keyword id="KW-0597">Phosphoprotein</keyword>
<keyword id="KW-0808">Transferase</keyword>
<organism>
    <name type="scientific">Cricetulus griseus</name>
    <name type="common">Chinese hamster</name>
    <name type="synonym">Cricetulus barabensis griseus</name>
    <dbReference type="NCBI Taxonomy" id="10029"/>
    <lineage>
        <taxon>Eukaryota</taxon>
        <taxon>Metazoa</taxon>
        <taxon>Chordata</taxon>
        <taxon>Craniata</taxon>
        <taxon>Vertebrata</taxon>
        <taxon>Euteleostomi</taxon>
        <taxon>Mammalia</taxon>
        <taxon>Eutheria</taxon>
        <taxon>Euarchontoglires</taxon>
        <taxon>Glires</taxon>
        <taxon>Rodentia</taxon>
        <taxon>Myomorpha</taxon>
        <taxon>Muroidea</taxon>
        <taxon>Cricetidae</taxon>
        <taxon>Cricetinae</taxon>
        <taxon>Cricetulus</taxon>
    </lineage>
</organism>
<reference key="1">
    <citation type="journal article" date="1997" name="J. Biol. Chem.">
        <title>Cellular UDP-glucose deficiency caused by a single point mutation in the UDP-glucose pyrophosphorylase gene.</title>
        <authorList>
            <person name="Flores-Diaz M."/>
            <person name="Alape-Giron A."/>
            <person name="Persson B."/>
            <person name="Pollesello P."/>
            <person name="Moos M."/>
            <person name="von Eichel-Streiber C."/>
            <person name="Thelestam M."/>
            <person name="Florin I."/>
        </authorList>
    </citation>
    <scope>NUCLEOTIDE SEQUENCE [MRNA]</scope>
    <scope>VARIANT ASP-116</scope>
    <source>
        <tissue>Fibroblast</tissue>
    </source>
</reference>
<gene>
    <name type="primary">UGP2</name>
    <name type="synonym">UGP1</name>
</gene>
<comment type="function">
    <text evidence="2">UTP--glucose-1-phosphate uridylyltransferase catalyzing the conversion of glucose-1-phosphate into UDP-glucose, a crucial precursor for the production of glycogen.</text>
</comment>
<comment type="catalytic activity">
    <reaction evidence="2">
        <text>alpha-D-glucose 1-phosphate + UTP + H(+) = UDP-alpha-D-glucose + diphosphate</text>
        <dbReference type="Rhea" id="RHEA:19889"/>
        <dbReference type="ChEBI" id="CHEBI:15378"/>
        <dbReference type="ChEBI" id="CHEBI:33019"/>
        <dbReference type="ChEBI" id="CHEBI:46398"/>
        <dbReference type="ChEBI" id="CHEBI:58601"/>
        <dbReference type="ChEBI" id="CHEBI:58885"/>
        <dbReference type="EC" id="2.7.7.9"/>
    </reaction>
    <physiologicalReaction direction="left-to-right" evidence="2">
        <dbReference type="Rhea" id="RHEA:19890"/>
    </physiologicalReaction>
</comment>
<comment type="pathway">
    <text evidence="2">Glycan biosynthesis; glycogen biosynthesis.</text>
</comment>
<comment type="subunit">
    <text evidence="2">Homooctamer.</text>
</comment>
<comment type="subcellular location">
    <subcellularLocation>
        <location evidence="2">Cytoplasm</location>
    </subcellularLocation>
</comment>
<comment type="similarity">
    <text evidence="5">Belongs to the UDPGP type 1 family.</text>
</comment>
<sequence length="508" mass="56924">MSRFVQDLSKAMSQDGASQFQEVILQELELSVKKELEKILTTATSHEYEHTKKDLDGFRKLYHRFLQEKGPSVDWGKIQRPPEDSIQPYEKIKARGLPDNISSVLNKLVVVKLNGGLGTSMGCKGPKSLIGVRNENTFLDLTVQQIEHLNKSYNTDVPLVLMNSFNTDEDTKKILQKYNHCRVKIYTFNQSRYPRINKESLLPVAKDVSSSGESTEAWYPPGHGDIYASFYNSGLLDTFLEEGKEYIFVSNIDNLGATVDLYILNHLMNPPNGKRCEFVMEVTNKTRADVKGGTLTQYEGKLRLVEIAQVPKAHVDEFKSVSKFKIFNTNNLWISLAAVKRLQEQNAIDMEIIVNPKTLDGGLNVIQLETAVGAAIKSFENSLGINVPRSRFLPVKTTSDLLLVMSNLYSLNAGSLTMSEKREFPTVPLVKLGSSFTKVQDYLRRFESIPDMLELDHLTVSGDVTFGKNVSLKGTVIIIANHGDRIDIPPGAVLENKIVSGNLRILDH</sequence>
<feature type="chain" id="PRO_0000185749" description="UTP--glucose-1-phosphate uridylyltransferase">
    <location>
        <begin position="1"/>
        <end position="508"/>
    </location>
</feature>
<feature type="region of interest" description="Oligomerization" evidence="1">
    <location>
        <begin position="457"/>
        <end position="508"/>
    </location>
</feature>
<feature type="region of interest" description="Critical for end-to-end subunit interaction" evidence="1">
    <location>
        <begin position="502"/>
        <end position="503"/>
    </location>
</feature>
<feature type="active site" evidence="1">
    <location>
        <position position="396"/>
    </location>
</feature>
<feature type="binding site" evidence="3">
    <location>
        <begin position="113"/>
        <end position="116"/>
    </location>
    <ligand>
        <name>UTP</name>
        <dbReference type="ChEBI" id="CHEBI:46398"/>
    </ligand>
</feature>
<feature type="binding site" evidence="2">
    <location>
        <begin position="115"/>
        <end position="116"/>
    </location>
    <ligand>
        <name>substrate</name>
    </ligand>
</feature>
<feature type="binding site" evidence="1">
    <location>
        <position position="127"/>
    </location>
    <ligand>
        <name>Mg(2+)</name>
        <dbReference type="ChEBI" id="CHEBI:18420"/>
    </ligand>
</feature>
<feature type="binding site" evidence="3">
    <location>
        <position position="127"/>
    </location>
    <ligand>
        <name>UTP</name>
        <dbReference type="ChEBI" id="CHEBI:46398"/>
    </ligand>
</feature>
<feature type="binding site" evidence="3">
    <location>
        <position position="190"/>
    </location>
    <ligand>
        <name>UTP</name>
        <dbReference type="ChEBI" id="CHEBI:46398"/>
    </ligand>
</feature>
<feature type="binding site" evidence="3">
    <location>
        <position position="222"/>
    </location>
    <ligand>
        <name>UTP</name>
        <dbReference type="ChEBI" id="CHEBI:46398"/>
    </ligand>
</feature>
<feature type="binding site" evidence="2">
    <location>
        <position position="223"/>
    </location>
    <ligand>
        <name>substrate</name>
    </ligand>
</feature>
<feature type="binding site" evidence="2">
    <location>
        <begin position="251"/>
        <end position="253"/>
    </location>
    <ligand>
        <name>substrate</name>
    </ligand>
</feature>
<feature type="binding site" evidence="1">
    <location>
        <position position="253"/>
    </location>
    <ligand>
        <name>Mg(2+)</name>
        <dbReference type="ChEBI" id="CHEBI:18420"/>
    </ligand>
</feature>
<feature type="binding site" evidence="3">
    <location>
        <position position="253"/>
    </location>
    <ligand>
        <name>UTP</name>
        <dbReference type="ChEBI" id="CHEBI:46398"/>
    </ligand>
</feature>
<feature type="binding site" evidence="3">
    <location>
        <position position="396"/>
    </location>
    <ligand>
        <name>UTP</name>
        <dbReference type="ChEBI" id="CHEBI:46398"/>
    </ligand>
</feature>
<feature type="modified residue" description="Phosphoserine" evidence="2">
    <location>
        <position position="13"/>
    </location>
</feature>
<feature type="modified residue" description="Phosphothreonine" evidence="2">
    <location>
        <position position="426"/>
    </location>
</feature>
<feature type="modified residue" description="Phosphoserine" evidence="2">
    <location>
        <position position="434"/>
    </location>
</feature>
<feature type="modified residue" description="N6-acetyllysine" evidence="2">
    <location>
        <position position="438"/>
    </location>
</feature>
<feature type="modified residue" description="Phosphoserine" evidence="2">
    <location>
        <position position="448"/>
    </location>
</feature>
<feature type="modified residue" description="Phosphoserine" evidence="2">
    <location>
        <position position="461"/>
    </location>
</feature>
<feature type="sequence variant" description="In Don Q cell line; low level of activity." evidence="4">
    <original>G</original>
    <variation>D</variation>
    <location>
        <position position="116"/>
    </location>
</feature>
<protein>
    <recommendedName>
        <fullName>UTP--glucose-1-phosphate uridylyltransferase</fullName>
        <ecNumber evidence="2">2.7.7.9</ecNumber>
    </recommendedName>
    <alternativeName>
        <fullName>UDP-glucose pyrophosphorylase</fullName>
        <shortName>UDPGP</shortName>
        <shortName>UGPase</shortName>
    </alternativeName>
</protein>
<evidence type="ECO:0000250" key="1"/>
<evidence type="ECO:0000250" key="2">
    <source>
        <dbReference type="UniProtKB" id="Q16851"/>
    </source>
</evidence>
<evidence type="ECO:0000250" key="3">
    <source>
        <dbReference type="UniProtKB" id="Q9M9P3"/>
    </source>
</evidence>
<evidence type="ECO:0000269" key="4">
    <source>
    </source>
</evidence>
<evidence type="ECO:0000305" key="5"/>
<accession>O35156</accession>
<proteinExistence type="evidence at transcript level"/>